<name>GYP8_YEAST</name>
<protein>
    <recommendedName>
        <fullName>GTPase-activating protein GYP8</fullName>
    </recommendedName>
</protein>
<comment type="miscellaneous">
    <text evidence="2">Present with 573 molecules/cell in log phase SD medium.</text>
</comment>
<accession>P43570</accession>
<accession>D6VTK3</accession>
<proteinExistence type="evidence at protein level"/>
<dbReference type="EMBL" id="D50617">
    <property type="protein sequence ID" value="BAA09211.1"/>
    <property type="molecule type" value="Genomic_DNA"/>
</dbReference>
<dbReference type="EMBL" id="AY693137">
    <property type="protein sequence ID" value="AAT93156.1"/>
    <property type="molecule type" value="Genomic_DNA"/>
</dbReference>
<dbReference type="EMBL" id="BK006940">
    <property type="protein sequence ID" value="DAA12413.1"/>
    <property type="molecule type" value="Genomic_DNA"/>
</dbReference>
<dbReference type="PIR" id="S56227">
    <property type="entry name" value="S56227"/>
</dbReference>
<dbReference type="RefSeq" id="NP_444296.1">
    <property type="nucleotide sequence ID" value="NM_001179939.1"/>
</dbReference>
<dbReference type="SMR" id="P43570"/>
<dbReference type="BioGRID" id="31119">
    <property type="interactions" value="98"/>
</dbReference>
<dbReference type="DIP" id="DIP-5431N"/>
<dbReference type="FunCoup" id="P43570">
    <property type="interactions" value="117"/>
</dbReference>
<dbReference type="IntAct" id="P43570">
    <property type="interactions" value="1"/>
</dbReference>
<dbReference type="STRING" id="4932.YFL027C"/>
<dbReference type="PaxDb" id="4932-YFL027C"/>
<dbReference type="PeptideAtlas" id="P43570"/>
<dbReference type="EnsemblFungi" id="YFL027C_mRNA">
    <property type="protein sequence ID" value="YFL027C"/>
    <property type="gene ID" value="YFL027C"/>
</dbReference>
<dbReference type="GeneID" id="850517"/>
<dbReference type="KEGG" id="sce:YFL027C"/>
<dbReference type="AGR" id="SGD:S000001867"/>
<dbReference type="SGD" id="S000001867">
    <property type="gene designation" value="GYP8"/>
</dbReference>
<dbReference type="VEuPathDB" id="FungiDB:YFL027C"/>
<dbReference type="eggNOG" id="KOG2595">
    <property type="taxonomic scope" value="Eukaryota"/>
</dbReference>
<dbReference type="GeneTree" id="ENSGT00390000014944"/>
<dbReference type="HOGENOM" id="CLU_039465_3_0_1"/>
<dbReference type="InParanoid" id="P43570"/>
<dbReference type="OMA" id="YLRDFMM"/>
<dbReference type="OrthoDB" id="206700at2759"/>
<dbReference type="BioCyc" id="YEAST:G3O-30433-MONOMER"/>
<dbReference type="Reactome" id="R-SCE-204005">
    <property type="pathway name" value="COPII-mediated vesicle transport"/>
</dbReference>
<dbReference type="BioGRID-ORCS" id="850517">
    <property type="hits" value="0 hits in 10 CRISPR screens"/>
</dbReference>
<dbReference type="PRO" id="PR:P43570"/>
<dbReference type="Proteomes" id="UP000002311">
    <property type="component" value="Chromosome VI"/>
</dbReference>
<dbReference type="RNAct" id="P43570">
    <property type="molecule type" value="protein"/>
</dbReference>
<dbReference type="GO" id="GO:0005737">
    <property type="term" value="C:cytoplasm"/>
    <property type="evidence" value="ECO:0000314"/>
    <property type="project" value="SGD"/>
</dbReference>
<dbReference type="GO" id="GO:0005789">
    <property type="term" value="C:endoplasmic reticulum membrane"/>
    <property type="evidence" value="ECO:0000318"/>
    <property type="project" value="GO_Central"/>
</dbReference>
<dbReference type="GO" id="GO:0005777">
    <property type="term" value="C:peroxisome"/>
    <property type="evidence" value="ECO:0000314"/>
    <property type="project" value="SGD"/>
</dbReference>
<dbReference type="GO" id="GO:0005096">
    <property type="term" value="F:GTPase activator activity"/>
    <property type="evidence" value="ECO:0000314"/>
    <property type="project" value="SGD"/>
</dbReference>
<dbReference type="GO" id="GO:0006888">
    <property type="term" value="P:endoplasmic reticulum to Golgi vesicle-mediated transport"/>
    <property type="evidence" value="ECO:0000318"/>
    <property type="project" value="GO_Central"/>
</dbReference>
<dbReference type="GO" id="GO:0016192">
    <property type="term" value="P:vesicle-mediated transport"/>
    <property type="evidence" value="ECO:0000315"/>
    <property type="project" value="SGD"/>
</dbReference>
<dbReference type="Gene3D" id="1.10.8.1310">
    <property type="match status" value="1"/>
</dbReference>
<dbReference type="Gene3D" id="1.10.472.80">
    <property type="entry name" value="Ypt/Rab-GAP domain of gyp1p, domain 3"/>
    <property type="match status" value="1"/>
</dbReference>
<dbReference type="InterPro" id="IPR000195">
    <property type="entry name" value="Rab-GAP-TBC_dom"/>
</dbReference>
<dbReference type="InterPro" id="IPR035969">
    <property type="entry name" value="Rab-GAP_TBC_sf"/>
</dbReference>
<dbReference type="InterPro" id="IPR045913">
    <property type="entry name" value="TBC20/Gyp8-like"/>
</dbReference>
<dbReference type="PANTHER" id="PTHR20913:SF7">
    <property type="entry name" value="RE60063P"/>
    <property type="match status" value="1"/>
</dbReference>
<dbReference type="PANTHER" id="PTHR20913">
    <property type="entry name" value="TBC1 DOMAIN FAMILY MEMBER 20/GTPASE"/>
    <property type="match status" value="1"/>
</dbReference>
<dbReference type="Pfam" id="PF00566">
    <property type="entry name" value="RabGAP-TBC"/>
    <property type="match status" value="1"/>
</dbReference>
<dbReference type="SUPFAM" id="SSF47923">
    <property type="entry name" value="Ypt/Rab-GAP domain of gyp1p"/>
    <property type="match status" value="1"/>
</dbReference>
<dbReference type="PROSITE" id="PS50086">
    <property type="entry name" value="TBC_RABGAP"/>
    <property type="match status" value="1"/>
</dbReference>
<feature type="chain" id="PRO_0000208018" description="GTPase-activating protein GYP8">
    <location>
        <begin position="1"/>
        <end position="497"/>
    </location>
</feature>
<feature type="domain" description="Rab-GAP TBC" evidence="1">
    <location>
        <begin position="69"/>
        <end position="281"/>
    </location>
</feature>
<keyword id="KW-0343">GTPase activation</keyword>
<keyword id="KW-1185">Reference proteome</keyword>
<organism>
    <name type="scientific">Saccharomyces cerevisiae (strain ATCC 204508 / S288c)</name>
    <name type="common">Baker's yeast</name>
    <dbReference type="NCBI Taxonomy" id="559292"/>
    <lineage>
        <taxon>Eukaryota</taxon>
        <taxon>Fungi</taxon>
        <taxon>Dikarya</taxon>
        <taxon>Ascomycota</taxon>
        <taxon>Saccharomycotina</taxon>
        <taxon>Saccharomycetes</taxon>
        <taxon>Saccharomycetales</taxon>
        <taxon>Saccharomycetaceae</taxon>
        <taxon>Saccharomyces</taxon>
    </lineage>
</organism>
<gene>
    <name type="primary">GYP8</name>
    <name type="ordered locus">YFL027C</name>
</gene>
<evidence type="ECO:0000255" key="1">
    <source>
        <dbReference type="PROSITE-ProRule" id="PRU00163"/>
    </source>
</evidence>
<evidence type="ECO:0000269" key="2">
    <source>
    </source>
</evidence>
<reference key="1">
    <citation type="journal article" date="1995" name="Nat. Genet.">
        <title>Analysis of the nucleotide sequence of chromosome VI from Saccharomyces cerevisiae.</title>
        <authorList>
            <person name="Murakami Y."/>
            <person name="Naitou M."/>
            <person name="Hagiwara H."/>
            <person name="Shibata T."/>
            <person name="Ozawa M."/>
            <person name="Sasanuma S."/>
            <person name="Sasanuma M."/>
            <person name="Tsuchiya Y."/>
            <person name="Soeda E."/>
            <person name="Yokoyama K."/>
            <person name="Yamazaki M."/>
            <person name="Tashiro H."/>
            <person name="Eki T."/>
        </authorList>
    </citation>
    <scope>NUCLEOTIDE SEQUENCE [LARGE SCALE GENOMIC DNA]</scope>
    <source>
        <strain>ATCC 204508 / S288c</strain>
    </source>
</reference>
<reference key="2">
    <citation type="journal article" date="2014" name="G3 (Bethesda)">
        <title>The reference genome sequence of Saccharomyces cerevisiae: Then and now.</title>
        <authorList>
            <person name="Engel S.R."/>
            <person name="Dietrich F.S."/>
            <person name="Fisk D.G."/>
            <person name="Binkley G."/>
            <person name="Balakrishnan R."/>
            <person name="Costanzo M.C."/>
            <person name="Dwight S.S."/>
            <person name="Hitz B.C."/>
            <person name="Karra K."/>
            <person name="Nash R.S."/>
            <person name="Weng S."/>
            <person name="Wong E.D."/>
            <person name="Lloyd P."/>
            <person name="Skrzypek M.S."/>
            <person name="Miyasato S.R."/>
            <person name="Simison M."/>
            <person name="Cherry J.M."/>
        </authorList>
    </citation>
    <scope>GENOME REANNOTATION</scope>
    <source>
        <strain>ATCC 204508 / S288c</strain>
    </source>
</reference>
<reference key="3">
    <citation type="journal article" date="2007" name="Genome Res.">
        <title>Approaching a complete repository of sequence-verified protein-encoding clones for Saccharomyces cerevisiae.</title>
        <authorList>
            <person name="Hu Y."/>
            <person name="Rolfs A."/>
            <person name="Bhullar B."/>
            <person name="Murthy T.V.S."/>
            <person name="Zhu C."/>
            <person name="Berger M.F."/>
            <person name="Camargo A.A."/>
            <person name="Kelley F."/>
            <person name="McCarron S."/>
            <person name="Jepson D."/>
            <person name="Richardson A."/>
            <person name="Raphael J."/>
            <person name="Moreira D."/>
            <person name="Taycher E."/>
            <person name="Zuo D."/>
            <person name="Mohr S."/>
            <person name="Kane M.F."/>
            <person name="Williamson J."/>
            <person name="Simpson A.J.G."/>
            <person name="Bulyk M.L."/>
            <person name="Harlow E."/>
            <person name="Marsischky G."/>
            <person name="Kolodner R.D."/>
            <person name="LaBaer J."/>
        </authorList>
    </citation>
    <scope>NUCLEOTIDE SEQUENCE [GENOMIC DNA]</scope>
    <source>
        <strain>ATCC 204508 / S288c</strain>
    </source>
</reference>
<reference key="4">
    <citation type="journal article" date="2003" name="Nature">
        <title>Global analysis of protein expression in yeast.</title>
        <authorList>
            <person name="Ghaemmaghami S."/>
            <person name="Huh W.-K."/>
            <person name="Bower K."/>
            <person name="Howson R.W."/>
            <person name="Belle A."/>
            <person name="Dephoure N."/>
            <person name="O'Shea E.K."/>
            <person name="Weissman J.S."/>
        </authorList>
    </citation>
    <scope>LEVEL OF PROTEIN EXPRESSION [LARGE SCALE ANALYSIS]</scope>
</reference>
<sequence length="497" mass="57619">MPLRSLFHTNQSSHDKDALTRGGYNAYLESLSRCDSGKAEEQKGKVISKLLEKKDVRALRYIGLGPLGFVNNSLRKDCWYELLASQLLIDDATEYITPVEKHKDEGQVILDAERSFGGIVDKNLKLQLRKLLVELITRVLRKYPTLNYYQGYHDIVSVFIMCFSWNVTKENGLELENLSLQEEIDMERLFYCIEAFTLLYLRDFMMNSLDFSFEQLRVISSLIKESNMKFYNLFKFDENEPLFAIGSILTIFAHNLKPIDSGDNNLHKILFQIFDMTISMQSMRLPLIIYKNLLLQNASEISKQIEANSDFFENDFDLRHGAIQTVLQKKLYDEALWEEVLQITRKDATTASKKALKRVSLNKYSALLNTACGKPGCFDMSTIIFYLSEQTKMNEHYKEEKYHGVAARSKTRALVQRLGHFLPSKYNRWSKISLLIGIVAILYQLRTTRSLSLVLNLRYMISTKLKDLSHININLHHVSHIWVDPIRDILKLGHPTR</sequence>